<gene>
    <name evidence="1" type="primary">ftsB</name>
    <name type="ordered locus">HD_1330</name>
</gene>
<comment type="function">
    <text evidence="1">Essential cell division protein. May link together the upstream cell division proteins, which are predominantly cytoplasmic, with the downstream cell division proteins, which are predominantly periplasmic.</text>
</comment>
<comment type="subunit">
    <text evidence="1">Part of a complex composed of FtsB, FtsL and FtsQ.</text>
</comment>
<comment type="subcellular location">
    <subcellularLocation>
        <location evidence="1">Cell inner membrane</location>
        <topology evidence="1">Single-pass type II membrane protein</topology>
    </subcellularLocation>
    <text evidence="1">Localizes to the division septum.</text>
</comment>
<comment type="similarity">
    <text evidence="1">Belongs to the FtsB family.</text>
</comment>
<accession>Q7VLT4</accession>
<dbReference type="EMBL" id="AE017143">
    <property type="protein sequence ID" value="AAP96151.1"/>
    <property type="molecule type" value="Genomic_DNA"/>
</dbReference>
<dbReference type="RefSeq" id="WP_010945200.1">
    <property type="nucleotide sequence ID" value="NC_002940.2"/>
</dbReference>
<dbReference type="SMR" id="Q7VLT4"/>
<dbReference type="STRING" id="233412.HD_1330"/>
<dbReference type="GeneID" id="60732696"/>
<dbReference type="KEGG" id="hdu:HD_1330"/>
<dbReference type="eggNOG" id="COG2919">
    <property type="taxonomic scope" value="Bacteria"/>
</dbReference>
<dbReference type="HOGENOM" id="CLU_134863_5_2_6"/>
<dbReference type="OrthoDB" id="7061211at2"/>
<dbReference type="Proteomes" id="UP000001022">
    <property type="component" value="Chromosome"/>
</dbReference>
<dbReference type="GO" id="GO:0032153">
    <property type="term" value="C:cell division site"/>
    <property type="evidence" value="ECO:0007669"/>
    <property type="project" value="UniProtKB-UniRule"/>
</dbReference>
<dbReference type="GO" id="GO:0030428">
    <property type="term" value="C:cell septum"/>
    <property type="evidence" value="ECO:0007669"/>
    <property type="project" value="TreeGrafter"/>
</dbReference>
<dbReference type="GO" id="GO:0005886">
    <property type="term" value="C:plasma membrane"/>
    <property type="evidence" value="ECO:0007669"/>
    <property type="project" value="UniProtKB-SubCell"/>
</dbReference>
<dbReference type="GO" id="GO:0043093">
    <property type="term" value="P:FtsZ-dependent cytokinesis"/>
    <property type="evidence" value="ECO:0007669"/>
    <property type="project" value="UniProtKB-UniRule"/>
</dbReference>
<dbReference type="HAMAP" id="MF_00599">
    <property type="entry name" value="FtsB"/>
    <property type="match status" value="1"/>
</dbReference>
<dbReference type="InterPro" id="IPR023081">
    <property type="entry name" value="Cell_div_FtsB"/>
</dbReference>
<dbReference type="InterPro" id="IPR007060">
    <property type="entry name" value="FtsL/DivIC"/>
</dbReference>
<dbReference type="NCBIfam" id="NF002058">
    <property type="entry name" value="PRK00888.1"/>
    <property type="match status" value="1"/>
</dbReference>
<dbReference type="PANTHER" id="PTHR37485">
    <property type="entry name" value="CELL DIVISION PROTEIN FTSB"/>
    <property type="match status" value="1"/>
</dbReference>
<dbReference type="PANTHER" id="PTHR37485:SF1">
    <property type="entry name" value="CELL DIVISION PROTEIN FTSB"/>
    <property type="match status" value="1"/>
</dbReference>
<dbReference type="Pfam" id="PF04977">
    <property type="entry name" value="DivIC"/>
    <property type="match status" value="1"/>
</dbReference>
<name>FTSB_HAEDU</name>
<reference key="1">
    <citation type="submission" date="2003-06" db="EMBL/GenBank/DDBJ databases">
        <title>The complete genome sequence of Haemophilus ducreyi.</title>
        <authorList>
            <person name="Munson R.S. Jr."/>
            <person name="Ray W.C."/>
            <person name="Mahairas G."/>
            <person name="Sabo P."/>
            <person name="Mungur R."/>
            <person name="Johnson L."/>
            <person name="Nguyen D."/>
            <person name="Wang J."/>
            <person name="Forst C."/>
            <person name="Hood L."/>
        </authorList>
    </citation>
    <scope>NUCLEOTIDE SEQUENCE [LARGE SCALE GENOMIC DNA]</scope>
    <source>
        <strain>35000HP / ATCC 700724</strain>
    </source>
</reference>
<organism>
    <name type="scientific">Haemophilus ducreyi (strain 35000HP / ATCC 700724)</name>
    <dbReference type="NCBI Taxonomy" id="233412"/>
    <lineage>
        <taxon>Bacteria</taxon>
        <taxon>Pseudomonadati</taxon>
        <taxon>Pseudomonadota</taxon>
        <taxon>Gammaproteobacteria</taxon>
        <taxon>Pasteurellales</taxon>
        <taxon>Pasteurellaceae</taxon>
        <taxon>Haemophilus</taxon>
    </lineage>
</organism>
<protein>
    <recommendedName>
        <fullName evidence="1">Cell division protein FtsB</fullName>
    </recommendedName>
</protein>
<feature type="chain" id="PRO_0000214444" description="Cell division protein FtsB">
    <location>
        <begin position="1"/>
        <end position="91"/>
    </location>
</feature>
<feature type="topological domain" description="Cytoplasmic" evidence="1">
    <location>
        <begin position="1"/>
        <end position="3"/>
    </location>
</feature>
<feature type="transmembrane region" description="Helical" evidence="1">
    <location>
        <begin position="4"/>
        <end position="21"/>
    </location>
</feature>
<feature type="topological domain" description="Periplasmic" evidence="1">
    <location>
        <begin position="22"/>
        <end position="91"/>
    </location>
</feature>
<feature type="coiled-coil region" evidence="1">
    <location>
        <begin position="27"/>
        <end position="76"/>
    </location>
</feature>
<keyword id="KW-0131">Cell cycle</keyword>
<keyword id="KW-0132">Cell division</keyword>
<keyword id="KW-0997">Cell inner membrane</keyword>
<keyword id="KW-1003">Cell membrane</keyword>
<keyword id="KW-0175">Coiled coil</keyword>
<keyword id="KW-0472">Membrane</keyword>
<keyword id="KW-1185">Reference proteome</keyword>
<keyword id="KW-0812">Transmembrane</keyword>
<keyword id="KW-1133">Transmembrane helix</keyword>
<evidence type="ECO:0000255" key="1">
    <source>
        <dbReference type="HAMAP-Rule" id="MF_00599"/>
    </source>
</evidence>
<sequence length="91" mass="10910">MRLMIVFFGLLLFFFQYSFWLGKNGWQDYKNAKLEVQRLTAENIKLNARNELIAAEIDDLKNGVDALEERARLDREMVKSDEYFYRIVPRN</sequence>
<proteinExistence type="inferred from homology"/>